<reference key="1">
    <citation type="journal article" date="2013" name="Appl. Environ. Microbiol.">
        <title>The genome of the alga-associated marine flavobacterium Formosa agariphila KMM 3901T reveals a broad potential for degradation of algal polysaccharides.</title>
        <authorList>
            <person name="Mann A.J."/>
            <person name="Hahnke R.L."/>
            <person name="Huang S."/>
            <person name="Werner J."/>
            <person name="Xing P."/>
            <person name="Barbeyron T."/>
            <person name="Huettel B."/>
            <person name="Stueber K."/>
            <person name="Reinhardt R."/>
            <person name="Harder J."/>
            <person name="Gloeckner F.O."/>
            <person name="Amann R.I."/>
            <person name="Teeling H."/>
        </authorList>
    </citation>
    <scope>NUCLEOTIDE SEQUENCE [LARGE SCALE GENOMIC DNA]</scope>
    <source>
        <strain>DSM 15362 / KCTC 12365 / LMG 23005 / KMM 3901 / M-2Alg 35-1</strain>
    </source>
</reference>
<reference key="2">
    <citation type="journal article" date="2019" name="Nat. Chem. Biol.">
        <title>A marine bacterial enzymatic cascade degrades the algal polysaccharide ulvan.</title>
        <authorList>
            <person name="Reisky L."/>
            <person name="Prechoux A."/>
            <person name="Zuehlke M.K."/>
            <person name="Baeumgen M."/>
            <person name="Robb C.S."/>
            <person name="Gerlach N."/>
            <person name="Roret T."/>
            <person name="Stanetty C."/>
            <person name="Larocque R."/>
            <person name="Michel G."/>
            <person name="Song T."/>
            <person name="Markert S."/>
            <person name="Unfried F."/>
            <person name="Mihovilovic M.D."/>
            <person name="Trautwein-Schult A."/>
            <person name="Becher D."/>
            <person name="Schweder T."/>
            <person name="Bornscheuer U.T."/>
            <person name="Hehemann J.H."/>
        </authorList>
    </citation>
    <scope>FUNCTION</scope>
    <scope>SUBCELLULAR LOCATION</scope>
    <scope>INDUCTION</scope>
</reference>
<name>PLH5_FORAG</name>
<proteinExistence type="evidence at transcript level"/>
<accession>T2KN98</accession>
<gene>
    <name evidence="1" type="primary">kduI</name>
    <name type="ORF">BN863_21940</name>
</gene>
<evidence type="ECO:0000255" key="1">
    <source>
        <dbReference type="HAMAP-Rule" id="MF_00687"/>
    </source>
</evidence>
<evidence type="ECO:0000269" key="2">
    <source>
    </source>
</evidence>
<evidence type="ECO:0000303" key="3">
    <source>
    </source>
</evidence>
<evidence type="ECO:0000305" key="4">
    <source>
    </source>
</evidence>
<protein>
    <recommendedName>
        <fullName evidence="1">4-deoxy-L-threo-5-hexosulose-uronate ketol-isomerase</fullName>
        <ecNumber evidence="1">5.3.1.17</ecNumber>
    </recommendedName>
    <alternativeName>
        <fullName evidence="1">5-keto-4-deoxyuronate isomerase</fullName>
    </alternativeName>
    <alternativeName>
        <fullName evidence="1">DKI isomerase</fullName>
    </alternativeName>
    <alternativeName>
        <fullName evidence="3">P5_isomerase</fullName>
    </alternativeName>
    <alternativeName>
        <fullName evidence="3">Polysaccharide utilization locus H protein P5</fullName>
        <shortName>PUL H protein P5</shortName>
    </alternativeName>
</protein>
<keyword id="KW-0963">Cytoplasm</keyword>
<keyword id="KW-0413">Isomerase</keyword>
<keyword id="KW-0479">Metal-binding</keyword>
<keyword id="KW-1185">Reference proteome</keyword>
<keyword id="KW-0862">Zinc</keyword>
<dbReference type="EC" id="5.3.1.17" evidence="1"/>
<dbReference type="EMBL" id="HG315671">
    <property type="protein sequence ID" value="CDF79906.1"/>
    <property type="molecule type" value="Genomic_DNA"/>
</dbReference>
<dbReference type="RefSeq" id="WP_038530484.1">
    <property type="nucleotide sequence ID" value="NZ_HG315671.1"/>
</dbReference>
<dbReference type="SMR" id="T2KN98"/>
<dbReference type="STRING" id="1347342.BN863_21940"/>
<dbReference type="PATRIC" id="fig|1347342.6.peg.2201"/>
<dbReference type="eggNOG" id="COG3717">
    <property type="taxonomic scope" value="Bacteria"/>
</dbReference>
<dbReference type="HOGENOM" id="CLU_062609_0_0_10"/>
<dbReference type="OrthoDB" id="9770644at2"/>
<dbReference type="Proteomes" id="UP000016160">
    <property type="component" value="Chromosome"/>
</dbReference>
<dbReference type="GO" id="GO:0005737">
    <property type="term" value="C:cytoplasm"/>
    <property type="evidence" value="ECO:0007669"/>
    <property type="project" value="UniProtKB-SubCell"/>
</dbReference>
<dbReference type="GO" id="GO:0008697">
    <property type="term" value="F:4-deoxy-L-threo-5-hexosulose-uronate ketol-isomerase activity"/>
    <property type="evidence" value="ECO:0007669"/>
    <property type="project" value="UniProtKB-UniRule"/>
</dbReference>
<dbReference type="GO" id="GO:0008270">
    <property type="term" value="F:zinc ion binding"/>
    <property type="evidence" value="ECO:0007669"/>
    <property type="project" value="UniProtKB-UniRule"/>
</dbReference>
<dbReference type="GO" id="GO:0019698">
    <property type="term" value="P:D-galacturonate catabolic process"/>
    <property type="evidence" value="ECO:0007669"/>
    <property type="project" value="TreeGrafter"/>
</dbReference>
<dbReference type="GO" id="GO:0042840">
    <property type="term" value="P:D-glucuronate catabolic process"/>
    <property type="evidence" value="ECO:0007669"/>
    <property type="project" value="TreeGrafter"/>
</dbReference>
<dbReference type="GO" id="GO:0045490">
    <property type="term" value="P:pectin catabolic process"/>
    <property type="evidence" value="ECO:0007669"/>
    <property type="project" value="UniProtKB-UniRule"/>
</dbReference>
<dbReference type="CDD" id="cd20491">
    <property type="entry name" value="cupin_KduI_C"/>
    <property type="match status" value="1"/>
</dbReference>
<dbReference type="CDD" id="cd20294">
    <property type="entry name" value="cupin_KduI_N"/>
    <property type="match status" value="1"/>
</dbReference>
<dbReference type="Gene3D" id="2.60.120.10">
    <property type="entry name" value="Jelly Rolls"/>
    <property type="match status" value="1"/>
</dbReference>
<dbReference type="Gene3D" id="2.60.120.520">
    <property type="entry name" value="pectin degrading enzyme 5-keto 4- deoxyuronate isomerase, domain 1"/>
    <property type="match status" value="1"/>
</dbReference>
<dbReference type="HAMAP" id="MF_00687">
    <property type="entry name" value="KduI"/>
    <property type="match status" value="1"/>
</dbReference>
<dbReference type="InterPro" id="IPR007045">
    <property type="entry name" value="KduI"/>
</dbReference>
<dbReference type="InterPro" id="IPR021120">
    <property type="entry name" value="KduI/IolB_isomerase"/>
</dbReference>
<dbReference type="InterPro" id="IPR027449">
    <property type="entry name" value="KduI_N"/>
</dbReference>
<dbReference type="InterPro" id="IPR014710">
    <property type="entry name" value="RmlC-like_jellyroll"/>
</dbReference>
<dbReference type="InterPro" id="IPR011051">
    <property type="entry name" value="RmlC_Cupin_sf"/>
</dbReference>
<dbReference type="NCBIfam" id="NF002091">
    <property type="entry name" value="PRK00924.1"/>
    <property type="match status" value="1"/>
</dbReference>
<dbReference type="PANTHER" id="PTHR38461">
    <property type="entry name" value="4-DEOXY-L-THREO-5-HEXOSULOSE-URONATE KETOL-ISOMERASE"/>
    <property type="match status" value="1"/>
</dbReference>
<dbReference type="PANTHER" id="PTHR38461:SF1">
    <property type="entry name" value="4-DEOXY-L-THREO-5-HEXOSULOSE-URONATE KETOL-ISOMERASE"/>
    <property type="match status" value="1"/>
</dbReference>
<dbReference type="Pfam" id="PF04962">
    <property type="entry name" value="KduI"/>
    <property type="match status" value="1"/>
</dbReference>
<dbReference type="PIRSF" id="PIRSF006625">
    <property type="entry name" value="KduI"/>
    <property type="match status" value="1"/>
</dbReference>
<dbReference type="SUPFAM" id="SSF51182">
    <property type="entry name" value="RmlC-like cupins"/>
    <property type="match status" value="1"/>
</dbReference>
<organism>
    <name type="scientific">Formosa agariphila (strain DSM 15362 / KCTC 12365 / LMG 23005 / KMM 3901 / M-2Alg 35-1)</name>
    <dbReference type="NCBI Taxonomy" id="1347342"/>
    <lineage>
        <taxon>Bacteria</taxon>
        <taxon>Pseudomonadati</taxon>
        <taxon>Bacteroidota</taxon>
        <taxon>Flavobacteriia</taxon>
        <taxon>Flavobacteriales</taxon>
        <taxon>Flavobacteriaceae</taxon>
        <taxon>Formosa</taxon>
    </lineage>
</organism>
<sequence>MSTKYESRYASSPQTVKQYDTQELRNEFLIDNLMQNDTINLTYTHYDRYIAGSAVPTSSPLTLETIDPLKSEYFLERRELGIINVGGTGSVTVDGTVYELGLKDALYVGMGNKDVVFASDDASNPAQFYLNSAPAHTNYPTKKVSKAEANKIELGTLETANHRTVNQMIIGGIVTTCQLQMGMTELKTGSVWNTMPAHVHNRRMEVYLYIDIPQDQAVCHFMGEPQETRHIWMQNNQAVISPPWSIHSGSGTSNYTFVWGMAGENLDYNDMDVAKITELR</sequence>
<feature type="chain" id="PRO_0000448314" description="4-deoxy-L-threo-5-hexosulose-uronate ketol-isomerase">
    <location>
        <begin position="1"/>
        <end position="280"/>
    </location>
</feature>
<feature type="binding site" evidence="1">
    <location>
        <position position="198"/>
    </location>
    <ligand>
        <name>Zn(2+)</name>
        <dbReference type="ChEBI" id="CHEBI:29105"/>
    </ligand>
</feature>
<feature type="binding site" evidence="1">
    <location>
        <position position="200"/>
    </location>
    <ligand>
        <name>Zn(2+)</name>
        <dbReference type="ChEBI" id="CHEBI:29105"/>
    </ligand>
</feature>
<feature type="binding site" evidence="1">
    <location>
        <position position="205"/>
    </location>
    <ligand>
        <name>Zn(2+)</name>
        <dbReference type="ChEBI" id="CHEBI:29105"/>
    </ligand>
</feature>
<feature type="binding site" evidence="1">
    <location>
        <position position="247"/>
    </location>
    <ligand>
        <name>Zn(2+)</name>
        <dbReference type="ChEBI" id="CHEBI:29105"/>
    </ligand>
</feature>
<comment type="function">
    <text evidence="1 4">Isomerase involved in ulvan degradation (Probable). Ulvan is the main polysaccharide component of the Ulvales (green seaweed) cell wall. It is composed of disaccharide building blocks comprising 3-sulfated rhamnose (Rha3S) linked to D-glucuronic acid (GlcA), L-iduronic acid (IduA), or D-xylose (Xyl) (Probable). Catalyzes the isomerization of 5-dehydro-4-deoxy-D-glucuronate to 3-deoxy-D-glycero-2,5-hexodiulosonate (By similarity).</text>
</comment>
<comment type="catalytic activity">
    <reaction evidence="1">
        <text>5-dehydro-4-deoxy-D-glucuronate = 3-deoxy-D-glycero-2,5-hexodiulosonate</text>
        <dbReference type="Rhea" id="RHEA:23896"/>
        <dbReference type="ChEBI" id="CHEBI:17117"/>
        <dbReference type="ChEBI" id="CHEBI:29071"/>
        <dbReference type="EC" id="5.3.1.17"/>
    </reaction>
</comment>
<comment type="cofactor">
    <cofactor evidence="1">
        <name>Zn(2+)</name>
        <dbReference type="ChEBI" id="CHEBI:29105"/>
    </cofactor>
    <text evidence="1">Binds 1 zinc ion per subunit.</text>
</comment>
<comment type="subcellular location">
    <subcellularLocation>
        <location evidence="2">Cytoplasm</location>
    </subcellularLocation>
</comment>
<comment type="induction">
    <text evidence="2">By ulvan and rhamnose.</text>
</comment>
<comment type="similarity">
    <text evidence="1">Belongs to the KduI family.</text>
</comment>